<organism>
    <name type="scientific">Methylobacterium radiotolerans (strain ATCC 27329 / DSM 1819 / JCM 2831 / NBRC 15690 / NCIMB 10815 / 0-1)</name>
    <dbReference type="NCBI Taxonomy" id="426355"/>
    <lineage>
        <taxon>Bacteria</taxon>
        <taxon>Pseudomonadati</taxon>
        <taxon>Pseudomonadota</taxon>
        <taxon>Alphaproteobacteria</taxon>
        <taxon>Hyphomicrobiales</taxon>
        <taxon>Methylobacteriaceae</taxon>
        <taxon>Methylobacterium</taxon>
    </lineage>
</organism>
<proteinExistence type="inferred from homology"/>
<sequence length="361" mass="39335">MIPFPTERLDAILARHDIVTAQLASGEIDPETVVQLSRELSDLDPVVAAIRAYRAALENLAGVEALIDEPGTDPEMRALAAEEKPEALAALETAHRALQLLLLPKDAADEKSAILEVRAGTGGDEAALFAGDLFRMYAKYAESKGWRVEVISESEGTVGGFREVVAEVKGRGVFARLKFESGAHRVQRVPDTETQGRIHTSAATVAVLPEAEEVDIHVNDADLKIDTMRAQGAGGQHVNKTESAIRITHLPTGIVVFVQEERSQHKNRARAMALLRARLYEAERNAKDSARAADRKAQVGSGDRSERIRTYNFPQGRVTDHRINLTLYKLEEVMAGTALDEVVDALITEHQAELLAAEGMA</sequence>
<gene>
    <name evidence="1" type="primary">prfA</name>
    <name type="ordered locus">Mrad2831_0137</name>
</gene>
<name>RF1_METRJ</name>
<evidence type="ECO:0000255" key="1">
    <source>
        <dbReference type="HAMAP-Rule" id="MF_00093"/>
    </source>
</evidence>
<evidence type="ECO:0000256" key="2">
    <source>
        <dbReference type="SAM" id="MobiDB-lite"/>
    </source>
</evidence>
<accession>B1M766</accession>
<protein>
    <recommendedName>
        <fullName evidence="1">Peptide chain release factor 1</fullName>
        <shortName evidence="1">RF-1</shortName>
    </recommendedName>
</protein>
<reference key="1">
    <citation type="submission" date="2008-03" db="EMBL/GenBank/DDBJ databases">
        <title>Complete sequence of chromosome of Methylobacterium radiotolerans JCM 2831.</title>
        <authorList>
            <consortium name="US DOE Joint Genome Institute"/>
            <person name="Copeland A."/>
            <person name="Lucas S."/>
            <person name="Lapidus A."/>
            <person name="Glavina del Rio T."/>
            <person name="Dalin E."/>
            <person name="Tice H."/>
            <person name="Bruce D."/>
            <person name="Goodwin L."/>
            <person name="Pitluck S."/>
            <person name="Kiss H."/>
            <person name="Brettin T."/>
            <person name="Detter J.C."/>
            <person name="Han C."/>
            <person name="Kuske C.R."/>
            <person name="Schmutz J."/>
            <person name="Larimer F."/>
            <person name="Land M."/>
            <person name="Hauser L."/>
            <person name="Kyrpides N."/>
            <person name="Mikhailova N."/>
            <person name="Marx C.J."/>
            <person name="Richardson P."/>
        </authorList>
    </citation>
    <scope>NUCLEOTIDE SEQUENCE [LARGE SCALE GENOMIC DNA]</scope>
    <source>
        <strain>ATCC 27329 / DSM 1819 / JCM 2831 / NBRC 15690 / NCIMB 10815 / 0-1</strain>
    </source>
</reference>
<keyword id="KW-0963">Cytoplasm</keyword>
<keyword id="KW-0488">Methylation</keyword>
<keyword id="KW-0648">Protein biosynthesis</keyword>
<dbReference type="EMBL" id="CP001001">
    <property type="protein sequence ID" value="ACB22164.1"/>
    <property type="molecule type" value="Genomic_DNA"/>
</dbReference>
<dbReference type="RefSeq" id="WP_012317162.1">
    <property type="nucleotide sequence ID" value="NC_010505.1"/>
</dbReference>
<dbReference type="SMR" id="B1M766"/>
<dbReference type="STRING" id="426355.Mrad2831_0137"/>
<dbReference type="GeneID" id="6136437"/>
<dbReference type="KEGG" id="mrd:Mrad2831_0137"/>
<dbReference type="eggNOG" id="COG0216">
    <property type="taxonomic scope" value="Bacteria"/>
</dbReference>
<dbReference type="HOGENOM" id="CLU_036856_0_1_5"/>
<dbReference type="OrthoDB" id="9806673at2"/>
<dbReference type="Proteomes" id="UP000006589">
    <property type="component" value="Chromosome"/>
</dbReference>
<dbReference type="GO" id="GO:0005737">
    <property type="term" value="C:cytoplasm"/>
    <property type="evidence" value="ECO:0007669"/>
    <property type="project" value="UniProtKB-SubCell"/>
</dbReference>
<dbReference type="GO" id="GO:0016149">
    <property type="term" value="F:translation release factor activity, codon specific"/>
    <property type="evidence" value="ECO:0007669"/>
    <property type="project" value="UniProtKB-UniRule"/>
</dbReference>
<dbReference type="FunFam" id="3.30.160.20:FF:000004">
    <property type="entry name" value="Peptide chain release factor 1"/>
    <property type="match status" value="1"/>
</dbReference>
<dbReference type="FunFam" id="3.30.70.1660:FF:000002">
    <property type="entry name" value="Peptide chain release factor 1"/>
    <property type="match status" value="1"/>
</dbReference>
<dbReference type="FunFam" id="3.30.70.1660:FF:000004">
    <property type="entry name" value="Peptide chain release factor 1"/>
    <property type="match status" value="1"/>
</dbReference>
<dbReference type="Gene3D" id="3.30.160.20">
    <property type="match status" value="1"/>
</dbReference>
<dbReference type="Gene3D" id="3.30.70.1660">
    <property type="match status" value="1"/>
</dbReference>
<dbReference type="Gene3D" id="6.10.140.1950">
    <property type="match status" value="1"/>
</dbReference>
<dbReference type="HAMAP" id="MF_00093">
    <property type="entry name" value="Rel_fac_1"/>
    <property type="match status" value="1"/>
</dbReference>
<dbReference type="InterPro" id="IPR005139">
    <property type="entry name" value="PCRF"/>
</dbReference>
<dbReference type="InterPro" id="IPR000352">
    <property type="entry name" value="Pep_chain_release_fac_I"/>
</dbReference>
<dbReference type="InterPro" id="IPR045853">
    <property type="entry name" value="Pep_chain_release_fac_I_sf"/>
</dbReference>
<dbReference type="InterPro" id="IPR050057">
    <property type="entry name" value="Prokaryotic/Mito_RF"/>
</dbReference>
<dbReference type="InterPro" id="IPR004373">
    <property type="entry name" value="RF-1"/>
</dbReference>
<dbReference type="NCBIfam" id="TIGR00019">
    <property type="entry name" value="prfA"/>
    <property type="match status" value="1"/>
</dbReference>
<dbReference type="NCBIfam" id="NF001859">
    <property type="entry name" value="PRK00591.1"/>
    <property type="match status" value="1"/>
</dbReference>
<dbReference type="PANTHER" id="PTHR43804">
    <property type="entry name" value="LD18447P"/>
    <property type="match status" value="1"/>
</dbReference>
<dbReference type="PANTHER" id="PTHR43804:SF7">
    <property type="entry name" value="LD18447P"/>
    <property type="match status" value="1"/>
</dbReference>
<dbReference type="Pfam" id="PF03462">
    <property type="entry name" value="PCRF"/>
    <property type="match status" value="1"/>
</dbReference>
<dbReference type="Pfam" id="PF00472">
    <property type="entry name" value="RF-1"/>
    <property type="match status" value="1"/>
</dbReference>
<dbReference type="SMART" id="SM00937">
    <property type="entry name" value="PCRF"/>
    <property type="match status" value="1"/>
</dbReference>
<dbReference type="SUPFAM" id="SSF75620">
    <property type="entry name" value="Release factor"/>
    <property type="match status" value="1"/>
</dbReference>
<dbReference type="PROSITE" id="PS00745">
    <property type="entry name" value="RF_PROK_I"/>
    <property type="match status" value="1"/>
</dbReference>
<comment type="function">
    <text evidence="1">Peptide chain release factor 1 directs the termination of translation in response to the peptide chain termination codons UAG and UAA.</text>
</comment>
<comment type="subcellular location">
    <subcellularLocation>
        <location evidence="1">Cytoplasm</location>
    </subcellularLocation>
</comment>
<comment type="PTM">
    <text evidence="1">Methylated by PrmC. Methylation increases the termination efficiency of RF1.</text>
</comment>
<comment type="similarity">
    <text evidence="1">Belongs to the prokaryotic/mitochondrial release factor family.</text>
</comment>
<feature type="chain" id="PRO_1000117247" description="Peptide chain release factor 1">
    <location>
        <begin position="1"/>
        <end position="361"/>
    </location>
</feature>
<feature type="region of interest" description="Disordered" evidence="2">
    <location>
        <begin position="285"/>
        <end position="312"/>
    </location>
</feature>
<feature type="compositionally biased region" description="Basic and acidic residues" evidence="2">
    <location>
        <begin position="285"/>
        <end position="309"/>
    </location>
</feature>
<feature type="modified residue" description="N5-methylglutamine" evidence="1">
    <location>
        <position position="236"/>
    </location>
</feature>